<accession>Q8FP52</accession>
<name>THIG_COREF</name>
<proteinExistence type="inferred from homology"/>
<dbReference type="EC" id="2.8.1.10" evidence="1"/>
<dbReference type="EMBL" id="BA000035">
    <property type="protein sequence ID" value="BAC18746.1"/>
    <property type="molecule type" value="Genomic_DNA"/>
</dbReference>
<dbReference type="RefSeq" id="WP_006767935.1">
    <property type="nucleotide sequence ID" value="NC_004369.1"/>
</dbReference>
<dbReference type="SMR" id="Q8FP52"/>
<dbReference type="STRING" id="196164.gene:10742364"/>
<dbReference type="KEGG" id="cef:CE1936"/>
<dbReference type="eggNOG" id="COG2022">
    <property type="taxonomic scope" value="Bacteria"/>
</dbReference>
<dbReference type="HOGENOM" id="CLU_062233_1_0_11"/>
<dbReference type="OrthoDB" id="9805935at2"/>
<dbReference type="UniPathway" id="UPA00060"/>
<dbReference type="Proteomes" id="UP000001409">
    <property type="component" value="Chromosome"/>
</dbReference>
<dbReference type="GO" id="GO:0005737">
    <property type="term" value="C:cytoplasm"/>
    <property type="evidence" value="ECO:0007669"/>
    <property type="project" value="UniProtKB-SubCell"/>
</dbReference>
<dbReference type="GO" id="GO:1990107">
    <property type="term" value="F:thiazole synthase activity"/>
    <property type="evidence" value="ECO:0007669"/>
    <property type="project" value="UniProtKB-EC"/>
</dbReference>
<dbReference type="GO" id="GO:0009229">
    <property type="term" value="P:thiamine diphosphate biosynthetic process"/>
    <property type="evidence" value="ECO:0007669"/>
    <property type="project" value="UniProtKB-UniRule"/>
</dbReference>
<dbReference type="CDD" id="cd04728">
    <property type="entry name" value="ThiG"/>
    <property type="match status" value="1"/>
</dbReference>
<dbReference type="Gene3D" id="3.20.20.70">
    <property type="entry name" value="Aldolase class I"/>
    <property type="match status" value="1"/>
</dbReference>
<dbReference type="HAMAP" id="MF_00443">
    <property type="entry name" value="ThiG"/>
    <property type="match status" value="1"/>
</dbReference>
<dbReference type="InterPro" id="IPR013785">
    <property type="entry name" value="Aldolase_TIM"/>
</dbReference>
<dbReference type="InterPro" id="IPR033983">
    <property type="entry name" value="Thiazole_synthase_ThiG"/>
</dbReference>
<dbReference type="InterPro" id="IPR008867">
    <property type="entry name" value="ThiG"/>
</dbReference>
<dbReference type="PANTHER" id="PTHR34266">
    <property type="entry name" value="THIAZOLE SYNTHASE"/>
    <property type="match status" value="1"/>
</dbReference>
<dbReference type="PANTHER" id="PTHR34266:SF2">
    <property type="entry name" value="THIAZOLE SYNTHASE"/>
    <property type="match status" value="1"/>
</dbReference>
<dbReference type="Pfam" id="PF05690">
    <property type="entry name" value="ThiG"/>
    <property type="match status" value="1"/>
</dbReference>
<dbReference type="SUPFAM" id="SSF110399">
    <property type="entry name" value="ThiG-like"/>
    <property type="match status" value="1"/>
</dbReference>
<reference key="1">
    <citation type="journal article" date="2003" name="Genome Res.">
        <title>Comparative complete genome sequence analysis of the amino acid replacements responsible for the thermostability of Corynebacterium efficiens.</title>
        <authorList>
            <person name="Nishio Y."/>
            <person name="Nakamura Y."/>
            <person name="Kawarabayasi Y."/>
            <person name="Usuda Y."/>
            <person name="Kimura E."/>
            <person name="Sugimoto S."/>
            <person name="Matsui K."/>
            <person name="Yamagishi A."/>
            <person name="Kikuchi H."/>
            <person name="Ikeo K."/>
            <person name="Gojobori T."/>
        </authorList>
    </citation>
    <scope>NUCLEOTIDE SEQUENCE [LARGE SCALE GENOMIC DNA]</scope>
    <source>
        <strain>DSM 44549 / YS-314 / AJ 12310 / JCM 11189 / NBRC 100395</strain>
    </source>
</reference>
<feature type="chain" id="PRO_0000162810" description="Thiazole synthase">
    <location>
        <begin position="1"/>
        <end position="259"/>
    </location>
</feature>
<feature type="active site" description="Schiff-base intermediate with DXP" evidence="1">
    <location>
        <position position="95"/>
    </location>
</feature>
<feature type="binding site" evidence="1">
    <location>
        <position position="156"/>
    </location>
    <ligand>
        <name>1-deoxy-D-xylulose 5-phosphate</name>
        <dbReference type="ChEBI" id="CHEBI:57792"/>
    </ligand>
</feature>
<feature type="binding site" evidence="1">
    <location>
        <begin position="182"/>
        <end position="183"/>
    </location>
    <ligand>
        <name>1-deoxy-D-xylulose 5-phosphate</name>
        <dbReference type="ChEBI" id="CHEBI:57792"/>
    </ligand>
</feature>
<feature type="binding site" evidence="1">
    <location>
        <begin position="204"/>
        <end position="205"/>
    </location>
    <ligand>
        <name>1-deoxy-D-xylulose 5-phosphate</name>
        <dbReference type="ChEBI" id="CHEBI:57792"/>
    </ligand>
</feature>
<evidence type="ECO:0000255" key="1">
    <source>
        <dbReference type="HAMAP-Rule" id="MF_00443"/>
    </source>
</evidence>
<sequence length="259" mass="27092">MLTIADRTFDSHLIMGTGGATSMAMLEESLVASGTELTTVAMRRHAATTTGESVFDLLRRLDITPLPNTAGCRTARDAVITAKLAREALGTNWVKVEVIADEHTLLPDVVELIDACELLVAEGFVVLAYTSDDPVVARRLEDVGCAAVMPLGSPIGTGLGILNPHNIELICSRAGVPVLLDAGVGTASDAALAMELGCDGVLLASAVNRCQDPVAMARAMRYAVDAGRLARGAGRIPKREHAVASSTFDGLASWSDQVL</sequence>
<protein>
    <recommendedName>
        <fullName evidence="1">Thiazole synthase</fullName>
        <ecNumber evidence="1">2.8.1.10</ecNumber>
    </recommendedName>
</protein>
<organism>
    <name type="scientific">Corynebacterium efficiens (strain DSM 44549 / YS-314 / AJ 12310 / JCM 11189 / NBRC 100395)</name>
    <dbReference type="NCBI Taxonomy" id="196164"/>
    <lineage>
        <taxon>Bacteria</taxon>
        <taxon>Bacillati</taxon>
        <taxon>Actinomycetota</taxon>
        <taxon>Actinomycetes</taxon>
        <taxon>Mycobacteriales</taxon>
        <taxon>Corynebacteriaceae</taxon>
        <taxon>Corynebacterium</taxon>
    </lineage>
</organism>
<comment type="function">
    <text evidence="1">Catalyzes the rearrangement of 1-deoxy-D-xylulose 5-phosphate (DXP) to produce the thiazole phosphate moiety of thiamine. Sulfur is provided by the thiocarboxylate moiety of the carrier protein ThiS. In vitro, sulfur can be provided by H(2)S.</text>
</comment>
<comment type="catalytic activity">
    <reaction evidence="1">
        <text>[ThiS sulfur-carrier protein]-C-terminal-Gly-aminoethanethioate + 2-iminoacetate + 1-deoxy-D-xylulose 5-phosphate = [ThiS sulfur-carrier protein]-C-terminal Gly-Gly + 2-[(2R,5Z)-2-carboxy-4-methylthiazol-5(2H)-ylidene]ethyl phosphate + 2 H2O + H(+)</text>
        <dbReference type="Rhea" id="RHEA:26297"/>
        <dbReference type="Rhea" id="RHEA-COMP:12909"/>
        <dbReference type="Rhea" id="RHEA-COMP:19908"/>
        <dbReference type="ChEBI" id="CHEBI:15377"/>
        <dbReference type="ChEBI" id="CHEBI:15378"/>
        <dbReference type="ChEBI" id="CHEBI:57792"/>
        <dbReference type="ChEBI" id="CHEBI:62899"/>
        <dbReference type="ChEBI" id="CHEBI:77846"/>
        <dbReference type="ChEBI" id="CHEBI:90778"/>
        <dbReference type="ChEBI" id="CHEBI:232372"/>
        <dbReference type="EC" id="2.8.1.10"/>
    </reaction>
</comment>
<comment type="pathway">
    <text evidence="1">Cofactor biosynthesis; thiamine diphosphate biosynthesis.</text>
</comment>
<comment type="subunit">
    <text evidence="1">Homotetramer. Forms heterodimers with either ThiH or ThiS.</text>
</comment>
<comment type="subcellular location">
    <subcellularLocation>
        <location evidence="1">Cytoplasm</location>
    </subcellularLocation>
</comment>
<comment type="similarity">
    <text evidence="1">Belongs to the ThiG family.</text>
</comment>
<gene>
    <name evidence="1" type="primary">thiG</name>
    <name type="ordered locus">CE1936</name>
</gene>
<keyword id="KW-0963">Cytoplasm</keyword>
<keyword id="KW-1185">Reference proteome</keyword>
<keyword id="KW-0704">Schiff base</keyword>
<keyword id="KW-0784">Thiamine biosynthesis</keyword>
<keyword id="KW-0808">Transferase</keyword>